<evidence type="ECO:0000255" key="1">
    <source>
        <dbReference type="HAMAP-Rule" id="MF_01279"/>
    </source>
</evidence>
<proteinExistence type="inferred from homology"/>
<feature type="chain" id="PRO_1000140317" description="Xaa-Pro dipeptidase">
    <location>
        <begin position="1"/>
        <end position="443"/>
    </location>
</feature>
<feature type="binding site" evidence="1">
    <location>
        <position position="246"/>
    </location>
    <ligand>
        <name>Mn(2+)</name>
        <dbReference type="ChEBI" id="CHEBI:29035"/>
        <label>2</label>
    </ligand>
</feature>
<feature type="binding site" evidence="1">
    <location>
        <position position="257"/>
    </location>
    <ligand>
        <name>Mn(2+)</name>
        <dbReference type="ChEBI" id="CHEBI:29035"/>
        <label>1</label>
    </ligand>
</feature>
<feature type="binding site" evidence="1">
    <location>
        <position position="257"/>
    </location>
    <ligand>
        <name>Mn(2+)</name>
        <dbReference type="ChEBI" id="CHEBI:29035"/>
        <label>2</label>
    </ligand>
</feature>
<feature type="binding site" evidence="1">
    <location>
        <position position="339"/>
    </location>
    <ligand>
        <name>Mn(2+)</name>
        <dbReference type="ChEBI" id="CHEBI:29035"/>
        <label>1</label>
    </ligand>
</feature>
<feature type="binding site" evidence="1">
    <location>
        <position position="384"/>
    </location>
    <ligand>
        <name>Mn(2+)</name>
        <dbReference type="ChEBI" id="CHEBI:29035"/>
        <label>1</label>
    </ligand>
</feature>
<feature type="binding site" evidence="1">
    <location>
        <position position="423"/>
    </location>
    <ligand>
        <name>Mn(2+)</name>
        <dbReference type="ChEBI" id="CHEBI:29035"/>
        <label>1</label>
    </ligand>
</feature>
<feature type="binding site" evidence="1">
    <location>
        <position position="423"/>
    </location>
    <ligand>
        <name>Mn(2+)</name>
        <dbReference type="ChEBI" id="CHEBI:29035"/>
        <label>2</label>
    </ligand>
</feature>
<gene>
    <name evidence="1" type="primary">pepQ</name>
    <name type="ordered locus">ECSE_4133</name>
</gene>
<organism>
    <name type="scientific">Escherichia coli (strain SE11)</name>
    <dbReference type="NCBI Taxonomy" id="409438"/>
    <lineage>
        <taxon>Bacteria</taxon>
        <taxon>Pseudomonadati</taxon>
        <taxon>Pseudomonadota</taxon>
        <taxon>Gammaproteobacteria</taxon>
        <taxon>Enterobacterales</taxon>
        <taxon>Enterobacteriaceae</taxon>
        <taxon>Escherichia</taxon>
    </lineage>
</organism>
<comment type="function">
    <text evidence="1">Splits dipeptides with a prolyl residue in the C-terminal position.</text>
</comment>
<comment type="catalytic activity">
    <reaction evidence="1">
        <text>Xaa-L-Pro dipeptide + H2O = an L-alpha-amino acid + L-proline</text>
        <dbReference type="Rhea" id="RHEA:76407"/>
        <dbReference type="ChEBI" id="CHEBI:15377"/>
        <dbReference type="ChEBI" id="CHEBI:59869"/>
        <dbReference type="ChEBI" id="CHEBI:60039"/>
        <dbReference type="ChEBI" id="CHEBI:195196"/>
        <dbReference type="EC" id="3.4.13.9"/>
    </reaction>
</comment>
<comment type="cofactor">
    <cofactor evidence="1">
        <name>Mn(2+)</name>
        <dbReference type="ChEBI" id="CHEBI:29035"/>
    </cofactor>
    <text evidence="1">Binds 2 manganese ions per subunit.</text>
</comment>
<comment type="similarity">
    <text evidence="1">Belongs to the peptidase M24B family. Bacterial-type prolidase subfamily.</text>
</comment>
<sequence>MESLASLYKNHIATLQERTRDALARFKLDALLIHSGELFNVFLDDHPYPFKVNPQFKAWVPVTQVPNCWLLVDGVNKPKLWFYLPVDYWHNVEPLPTSFWTEDVEVIALPKADGIGSLLPAARGNIGYIGPVPERALQLGIEASNINPKGVLDYLHYYRSFKTEYELACMREAQKMAVNGHRAAEEAFRSGMSEFDINIAYLTATGHRDTDVPYSNIVALNEHAAVLHYTKLDHQAPEEMYSFLLDAGAEYNGYAADLTRTWSAKSDNDYAQLVKDVNDEQLALIATMKAGVSYVDYHIQFHQRIAKLLRKHQIITDMSEEAMVENDLTGPFMPHGIGHPLGLQVHDVAGFMQDDSGTHLAAPAKYPYLRCTRILQPGMVLTIEPGIYFIESLLAPWREGQFSKHFNWQKIEALKPFGGIRIEDNVVIHENNVENMTRDLKLA</sequence>
<protein>
    <recommendedName>
        <fullName evidence="1">Xaa-Pro dipeptidase</fullName>
        <shortName evidence="1">X-Pro dipeptidase</shortName>
        <ecNumber evidence="1">3.4.13.9</ecNumber>
    </recommendedName>
    <alternativeName>
        <fullName evidence="1">Imidodipeptidase</fullName>
    </alternativeName>
    <alternativeName>
        <fullName evidence="1">Proline dipeptidase</fullName>
        <shortName evidence="1">Prolidase</shortName>
    </alternativeName>
</protein>
<keyword id="KW-0224">Dipeptidase</keyword>
<keyword id="KW-0378">Hydrolase</keyword>
<keyword id="KW-0464">Manganese</keyword>
<keyword id="KW-0479">Metal-binding</keyword>
<keyword id="KW-0482">Metalloprotease</keyword>
<keyword id="KW-0645">Protease</keyword>
<name>PEPQ_ECOSE</name>
<accession>B6I4I7</accession>
<dbReference type="EC" id="3.4.13.9" evidence="1"/>
<dbReference type="EMBL" id="AP009240">
    <property type="protein sequence ID" value="BAG79657.1"/>
    <property type="molecule type" value="Genomic_DNA"/>
</dbReference>
<dbReference type="RefSeq" id="WP_000444574.1">
    <property type="nucleotide sequence ID" value="NC_011415.1"/>
</dbReference>
<dbReference type="SMR" id="B6I4I7"/>
<dbReference type="MEROPS" id="M24.003"/>
<dbReference type="KEGG" id="ecy:ECSE_4133"/>
<dbReference type="HOGENOM" id="CLU_050675_0_0_6"/>
<dbReference type="Proteomes" id="UP000008199">
    <property type="component" value="Chromosome"/>
</dbReference>
<dbReference type="GO" id="GO:0005829">
    <property type="term" value="C:cytosol"/>
    <property type="evidence" value="ECO:0007669"/>
    <property type="project" value="TreeGrafter"/>
</dbReference>
<dbReference type="GO" id="GO:0004177">
    <property type="term" value="F:aminopeptidase activity"/>
    <property type="evidence" value="ECO:0007669"/>
    <property type="project" value="TreeGrafter"/>
</dbReference>
<dbReference type="GO" id="GO:0046872">
    <property type="term" value="F:metal ion binding"/>
    <property type="evidence" value="ECO:0007669"/>
    <property type="project" value="UniProtKB-KW"/>
</dbReference>
<dbReference type="GO" id="GO:0008235">
    <property type="term" value="F:metalloexopeptidase activity"/>
    <property type="evidence" value="ECO:0007669"/>
    <property type="project" value="UniProtKB-UniRule"/>
</dbReference>
<dbReference type="GO" id="GO:0016795">
    <property type="term" value="F:phosphoric triester hydrolase activity"/>
    <property type="evidence" value="ECO:0007669"/>
    <property type="project" value="InterPro"/>
</dbReference>
<dbReference type="GO" id="GO:0102009">
    <property type="term" value="F:proline dipeptidase activity"/>
    <property type="evidence" value="ECO:0007669"/>
    <property type="project" value="UniProtKB-EC"/>
</dbReference>
<dbReference type="GO" id="GO:0006508">
    <property type="term" value="P:proteolysis"/>
    <property type="evidence" value="ECO:0007669"/>
    <property type="project" value="UniProtKB-KW"/>
</dbReference>
<dbReference type="CDD" id="cd01087">
    <property type="entry name" value="Prolidase"/>
    <property type="match status" value="1"/>
</dbReference>
<dbReference type="FunFam" id="3.40.350.10:FF:000002">
    <property type="entry name" value="Xaa-Pro dipeptidase"/>
    <property type="match status" value="1"/>
</dbReference>
<dbReference type="FunFam" id="3.90.230.10:FF:000006">
    <property type="entry name" value="Xaa-Pro dipeptidase"/>
    <property type="match status" value="1"/>
</dbReference>
<dbReference type="Gene3D" id="3.90.230.10">
    <property type="entry name" value="Creatinase/methionine aminopeptidase superfamily"/>
    <property type="match status" value="1"/>
</dbReference>
<dbReference type="Gene3D" id="3.40.350.10">
    <property type="entry name" value="Creatinase/prolidase N-terminal domain"/>
    <property type="match status" value="1"/>
</dbReference>
<dbReference type="HAMAP" id="MF_01279">
    <property type="entry name" value="X_Pro_dipeptid"/>
    <property type="match status" value="1"/>
</dbReference>
<dbReference type="InterPro" id="IPR029149">
    <property type="entry name" value="Creatin/AminoP/Spt16_N"/>
</dbReference>
<dbReference type="InterPro" id="IPR036005">
    <property type="entry name" value="Creatinase/aminopeptidase-like"/>
</dbReference>
<dbReference type="InterPro" id="IPR048819">
    <property type="entry name" value="PepQ_N"/>
</dbReference>
<dbReference type="InterPro" id="IPR000994">
    <property type="entry name" value="Pept_M24"/>
</dbReference>
<dbReference type="InterPro" id="IPR001131">
    <property type="entry name" value="Peptidase_M24B_aminopep-P_CS"/>
</dbReference>
<dbReference type="InterPro" id="IPR052433">
    <property type="entry name" value="X-Pro_dipept-like"/>
</dbReference>
<dbReference type="InterPro" id="IPR022846">
    <property type="entry name" value="X_Pro_dipept"/>
</dbReference>
<dbReference type="NCBIfam" id="NF010133">
    <property type="entry name" value="PRK13607.1"/>
    <property type="match status" value="1"/>
</dbReference>
<dbReference type="PANTHER" id="PTHR43226">
    <property type="entry name" value="XAA-PRO AMINOPEPTIDASE 3"/>
    <property type="match status" value="1"/>
</dbReference>
<dbReference type="PANTHER" id="PTHR43226:SF8">
    <property type="entry name" value="XAA-PRO DIPEPTIDASE"/>
    <property type="match status" value="1"/>
</dbReference>
<dbReference type="Pfam" id="PF21216">
    <property type="entry name" value="PepQ_N"/>
    <property type="match status" value="1"/>
</dbReference>
<dbReference type="Pfam" id="PF00557">
    <property type="entry name" value="Peptidase_M24"/>
    <property type="match status" value="1"/>
</dbReference>
<dbReference type="SUPFAM" id="SSF55920">
    <property type="entry name" value="Creatinase/aminopeptidase"/>
    <property type="match status" value="1"/>
</dbReference>
<dbReference type="PROSITE" id="PS00491">
    <property type="entry name" value="PROLINE_PEPTIDASE"/>
    <property type="match status" value="1"/>
</dbReference>
<reference key="1">
    <citation type="journal article" date="2008" name="DNA Res.">
        <title>Complete genome sequence and comparative analysis of the wild-type commensal Escherichia coli strain SE11 isolated from a healthy adult.</title>
        <authorList>
            <person name="Oshima K."/>
            <person name="Toh H."/>
            <person name="Ogura Y."/>
            <person name="Sasamoto H."/>
            <person name="Morita H."/>
            <person name="Park S.-H."/>
            <person name="Ooka T."/>
            <person name="Iyoda S."/>
            <person name="Taylor T.D."/>
            <person name="Hayashi T."/>
            <person name="Itoh K."/>
            <person name="Hattori M."/>
        </authorList>
    </citation>
    <scope>NUCLEOTIDE SEQUENCE [LARGE SCALE GENOMIC DNA]</scope>
    <source>
        <strain>SE11</strain>
    </source>
</reference>